<reference key="1">
    <citation type="journal article" date="2013" name="Nature">
        <title>The zebrafish reference genome sequence and its relationship to the human genome.</title>
        <authorList>
            <person name="Howe K."/>
            <person name="Clark M.D."/>
            <person name="Torroja C.F."/>
            <person name="Torrance J."/>
            <person name="Berthelot C."/>
            <person name="Muffato M."/>
            <person name="Collins J.E."/>
            <person name="Humphray S."/>
            <person name="McLaren K."/>
            <person name="Matthews L."/>
            <person name="McLaren S."/>
            <person name="Sealy I."/>
            <person name="Caccamo M."/>
            <person name="Churcher C."/>
            <person name="Scott C."/>
            <person name="Barrett J.C."/>
            <person name="Koch R."/>
            <person name="Rauch G.J."/>
            <person name="White S."/>
            <person name="Chow W."/>
            <person name="Kilian B."/>
            <person name="Quintais L.T."/>
            <person name="Guerra-Assuncao J.A."/>
            <person name="Zhou Y."/>
            <person name="Gu Y."/>
            <person name="Yen J."/>
            <person name="Vogel J.H."/>
            <person name="Eyre T."/>
            <person name="Redmond S."/>
            <person name="Banerjee R."/>
            <person name="Chi J."/>
            <person name="Fu B."/>
            <person name="Langley E."/>
            <person name="Maguire S.F."/>
            <person name="Laird G.K."/>
            <person name="Lloyd D."/>
            <person name="Kenyon E."/>
            <person name="Donaldson S."/>
            <person name="Sehra H."/>
            <person name="Almeida-King J."/>
            <person name="Loveland J."/>
            <person name="Trevanion S."/>
            <person name="Jones M."/>
            <person name="Quail M."/>
            <person name="Willey D."/>
            <person name="Hunt A."/>
            <person name="Burton J."/>
            <person name="Sims S."/>
            <person name="McLay K."/>
            <person name="Plumb B."/>
            <person name="Davis J."/>
            <person name="Clee C."/>
            <person name="Oliver K."/>
            <person name="Clark R."/>
            <person name="Riddle C."/>
            <person name="Elliot D."/>
            <person name="Threadgold G."/>
            <person name="Harden G."/>
            <person name="Ware D."/>
            <person name="Begum S."/>
            <person name="Mortimore B."/>
            <person name="Kerry G."/>
            <person name="Heath P."/>
            <person name="Phillimore B."/>
            <person name="Tracey A."/>
            <person name="Corby N."/>
            <person name="Dunn M."/>
            <person name="Johnson C."/>
            <person name="Wood J."/>
            <person name="Clark S."/>
            <person name="Pelan S."/>
            <person name="Griffiths G."/>
            <person name="Smith M."/>
            <person name="Glithero R."/>
            <person name="Howden P."/>
            <person name="Barker N."/>
            <person name="Lloyd C."/>
            <person name="Stevens C."/>
            <person name="Harley J."/>
            <person name="Holt K."/>
            <person name="Panagiotidis G."/>
            <person name="Lovell J."/>
            <person name="Beasley H."/>
            <person name="Henderson C."/>
            <person name="Gordon D."/>
            <person name="Auger K."/>
            <person name="Wright D."/>
            <person name="Collins J."/>
            <person name="Raisen C."/>
            <person name="Dyer L."/>
            <person name="Leung K."/>
            <person name="Robertson L."/>
            <person name="Ambridge K."/>
            <person name="Leongamornlert D."/>
            <person name="McGuire S."/>
            <person name="Gilderthorp R."/>
            <person name="Griffiths C."/>
            <person name="Manthravadi D."/>
            <person name="Nichol S."/>
            <person name="Barker G."/>
            <person name="Whitehead S."/>
            <person name="Kay M."/>
            <person name="Brown J."/>
            <person name="Murnane C."/>
            <person name="Gray E."/>
            <person name="Humphries M."/>
            <person name="Sycamore N."/>
            <person name="Barker D."/>
            <person name="Saunders D."/>
            <person name="Wallis J."/>
            <person name="Babbage A."/>
            <person name="Hammond S."/>
            <person name="Mashreghi-Mohammadi M."/>
            <person name="Barr L."/>
            <person name="Martin S."/>
            <person name="Wray P."/>
            <person name="Ellington A."/>
            <person name="Matthews N."/>
            <person name="Ellwood M."/>
            <person name="Woodmansey R."/>
            <person name="Clark G."/>
            <person name="Cooper J."/>
            <person name="Tromans A."/>
            <person name="Grafham D."/>
            <person name="Skuce C."/>
            <person name="Pandian R."/>
            <person name="Andrews R."/>
            <person name="Harrison E."/>
            <person name="Kimberley A."/>
            <person name="Garnett J."/>
            <person name="Fosker N."/>
            <person name="Hall R."/>
            <person name="Garner P."/>
            <person name="Kelly D."/>
            <person name="Bird C."/>
            <person name="Palmer S."/>
            <person name="Gehring I."/>
            <person name="Berger A."/>
            <person name="Dooley C.M."/>
            <person name="Ersan-Urun Z."/>
            <person name="Eser C."/>
            <person name="Geiger H."/>
            <person name="Geisler M."/>
            <person name="Karotki L."/>
            <person name="Kirn A."/>
            <person name="Konantz J."/>
            <person name="Konantz M."/>
            <person name="Oberlander M."/>
            <person name="Rudolph-Geiger S."/>
            <person name="Teucke M."/>
            <person name="Lanz C."/>
            <person name="Raddatz G."/>
            <person name="Osoegawa K."/>
            <person name="Zhu B."/>
            <person name="Rapp A."/>
            <person name="Widaa S."/>
            <person name="Langford C."/>
            <person name="Yang F."/>
            <person name="Schuster S.C."/>
            <person name="Carter N.P."/>
            <person name="Harrow J."/>
            <person name="Ning Z."/>
            <person name="Herrero J."/>
            <person name="Searle S.M."/>
            <person name="Enright A."/>
            <person name="Geisler R."/>
            <person name="Plasterk R.H."/>
            <person name="Lee C."/>
            <person name="Westerfield M."/>
            <person name="de Jong P.J."/>
            <person name="Zon L.I."/>
            <person name="Postlethwait J.H."/>
            <person name="Nusslein-Volhard C."/>
            <person name="Hubbard T.J."/>
            <person name="Roest Crollius H."/>
            <person name="Rogers J."/>
            <person name="Stemple D.L."/>
        </authorList>
    </citation>
    <scope>NUCLEOTIDE SEQUENCE [LARGE SCALE GENOMIC DNA]</scope>
    <source>
        <strain>Tuebingen</strain>
    </source>
</reference>
<reference key="2">
    <citation type="submission" date="2003-01" db="EMBL/GenBank/DDBJ databases">
        <authorList>
            <consortium name="NIH - Zebrafish Gene Collection (ZGC) project"/>
        </authorList>
    </citation>
    <scope>NUCLEOTIDE SEQUENCE [LARGE SCALE MRNA]</scope>
    <source>
        <strain>AB</strain>
    </source>
</reference>
<evidence type="ECO:0000250" key="1"/>
<evidence type="ECO:0000256" key="2">
    <source>
        <dbReference type="SAM" id="MobiDB-lite"/>
    </source>
</evidence>
<evidence type="ECO:0000305" key="3"/>
<keyword id="KW-0131">Cell cycle</keyword>
<keyword id="KW-0132">Cell division</keyword>
<keyword id="KW-0235">DNA replication</keyword>
<keyword id="KW-0498">Mitosis</keyword>
<keyword id="KW-0539">Nucleus</keyword>
<keyword id="KW-1185">Reference proteome</keyword>
<dbReference type="EMBL" id="BX005252">
    <property type="protein sequence ID" value="CAP09248.1"/>
    <property type="molecule type" value="Genomic_DNA"/>
</dbReference>
<dbReference type="EMBL" id="BC044562">
    <property type="protein sequence ID" value="AAH44562.1"/>
    <property type="molecule type" value="mRNA"/>
</dbReference>
<dbReference type="RefSeq" id="NP_997743.1">
    <property type="nucleotide sequence ID" value="NM_212578.1"/>
</dbReference>
<dbReference type="RefSeq" id="XP_068081022.1">
    <property type="nucleotide sequence ID" value="XM_068224921.1"/>
</dbReference>
<dbReference type="FunCoup" id="Q803A6">
    <property type="interactions" value="2076"/>
</dbReference>
<dbReference type="STRING" id="7955.ENSDARP00000130337"/>
<dbReference type="PaxDb" id="7955-ENSDARP00000120704"/>
<dbReference type="Ensembl" id="ENSDART00000135788">
    <property type="protein sequence ID" value="ENSDARP00000120704"/>
    <property type="gene ID" value="ENSDARG00000055314"/>
</dbReference>
<dbReference type="Ensembl" id="ENSDART00000168099">
    <property type="protein sequence ID" value="ENSDARP00000130337"/>
    <property type="gene ID" value="ENSDARG00000055314"/>
</dbReference>
<dbReference type="GeneID" id="321119"/>
<dbReference type="KEGG" id="dre:321119"/>
<dbReference type="AGR" id="ZFIN:ZDB-GENE-030131-9676"/>
<dbReference type="CTD" id="79892"/>
<dbReference type="ZFIN" id="ZDB-GENE-030131-9676">
    <property type="gene designation" value="mcmbp"/>
</dbReference>
<dbReference type="eggNOG" id="KOG2545">
    <property type="taxonomic scope" value="Eukaryota"/>
</dbReference>
<dbReference type="HOGENOM" id="CLU_029811_0_0_1"/>
<dbReference type="InParanoid" id="Q803A6"/>
<dbReference type="OMA" id="EEHTEMI"/>
<dbReference type="OrthoDB" id="329666at2759"/>
<dbReference type="PhylomeDB" id="Q803A6"/>
<dbReference type="TreeFam" id="TF324793"/>
<dbReference type="PRO" id="PR:Q803A6"/>
<dbReference type="Proteomes" id="UP000000437">
    <property type="component" value="Chromosome 13"/>
</dbReference>
<dbReference type="Bgee" id="ENSDARG00000055314">
    <property type="expression patterns" value="Expressed in blastula and 41 other cell types or tissues"/>
</dbReference>
<dbReference type="ExpressionAtlas" id="Q803A6">
    <property type="expression patterns" value="baseline and differential"/>
</dbReference>
<dbReference type="GO" id="GO:0005634">
    <property type="term" value="C:nucleus"/>
    <property type="evidence" value="ECO:0000250"/>
    <property type="project" value="UniProtKB"/>
</dbReference>
<dbReference type="GO" id="GO:0003682">
    <property type="term" value="F:chromatin binding"/>
    <property type="evidence" value="ECO:0000250"/>
    <property type="project" value="UniProtKB"/>
</dbReference>
<dbReference type="GO" id="GO:0051301">
    <property type="term" value="P:cell division"/>
    <property type="evidence" value="ECO:0007669"/>
    <property type="project" value="UniProtKB-KW"/>
</dbReference>
<dbReference type="GO" id="GO:0006261">
    <property type="term" value="P:DNA-templated DNA replication"/>
    <property type="evidence" value="ECO:0000250"/>
    <property type="project" value="UniProtKB"/>
</dbReference>
<dbReference type="GO" id="GO:0007062">
    <property type="term" value="P:sister chromatid cohesion"/>
    <property type="evidence" value="ECO:0000250"/>
    <property type="project" value="UniProtKB"/>
</dbReference>
<dbReference type="InterPro" id="IPR019140">
    <property type="entry name" value="MCM_complex-bd"/>
</dbReference>
<dbReference type="PANTHER" id="PTHR13489">
    <property type="entry name" value="MINI-CHROMOSOME MAINTENANCE COMPLEX-BINDING PROTEIN"/>
    <property type="match status" value="1"/>
</dbReference>
<dbReference type="PANTHER" id="PTHR13489:SF0">
    <property type="entry name" value="MINI-CHROMOSOME MAINTENANCE COMPLEX-BINDING PROTEIN"/>
    <property type="match status" value="1"/>
</dbReference>
<dbReference type="Pfam" id="PF09739">
    <property type="entry name" value="MCM_bind"/>
    <property type="match status" value="1"/>
</dbReference>
<organism>
    <name type="scientific">Danio rerio</name>
    <name type="common">Zebrafish</name>
    <name type="synonym">Brachydanio rerio</name>
    <dbReference type="NCBI Taxonomy" id="7955"/>
    <lineage>
        <taxon>Eukaryota</taxon>
        <taxon>Metazoa</taxon>
        <taxon>Chordata</taxon>
        <taxon>Craniata</taxon>
        <taxon>Vertebrata</taxon>
        <taxon>Euteleostomi</taxon>
        <taxon>Actinopterygii</taxon>
        <taxon>Neopterygii</taxon>
        <taxon>Teleostei</taxon>
        <taxon>Ostariophysi</taxon>
        <taxon>Cypriniformes</taxon>
        <taxon>Danionidae</taxon>
        <taxon>Danioninae</taxon>
        <taxon>Danio</taxon>
    </lineage>
</organism>
<feature type="chain" id="PRO_0000405809" description="Mini-chromosome maintenance complex-binding protein">
    <location>
        <begin position="1"/>
        <end position="631"/>
    </location>
</feature>
<feature type="region of interest" description="Disordered" evidence="2">
    <location>
        <begin position="148"/>
        <end position="218"/>
    </location>
</feature>
<feature type="compositionally biased region" description="Polar residues" evidence="2">
    <location>
        <begin position="148"/>
        <end position="157"/>
    </location>
</feature>
<feature type="compositionally biased region" description="Polar residues" evidence="2">
    <location>
        <begin position="173"/>
        <end position="192"/>
    </location>
</feature>
<feature type="compositionally biased region" description="Basic and acidic residues" evidence="2">
    <location>
        <begin position="193"/>
        <end position="202"/>
    </location>
</feature>
<feature type="compositionally biased region" description="Low complexity" evidence="2">
    <location>
        <begin position="206"/>
        <end position="217"/>
    </location>
</feature>
<feature type="sequence conflict" description="In Ref. 2; AAH44562." evidence="3" ref="2">
    <original>S</original>
    <variation>T</variation>
    <location>
        <position position="189"/>
    </location>
</feature>
<feature type="sequence conflict" description="In Ref. 2; AAH44562." evidence="3" ref="2">
    <original>F</original>
    <variation>Y</variation>
    <location>
        <position position="357"/>
    </location>
</feature>
<comment type="function">
    <text evidence="1">Associated component of the mcm complex that acts as a regulator of DNA replication. Binds to the MCM complex during late S phase and promotes the disassembly of the mcm complex from chromatin, thereby acting as a key regulator of pre-replication complex (pre-RC) unloading from replicated DNA. Can dissociate the mcm complex without addition of ATP; probably acts by destabilizing interactions of each individual subunits of the mcm complex. Required for sister chromatid cohesion (By similarity).</text>
</comment>
<comment type="subunit">
    <text evidence="1">Interacts with the mcm complex: associates with the mcm3-7 complex which lacks mcm2, while it does not interact with the mcm complex when mcm2 is present (mcm2-7 complex).</text>
</comment>
<comment type="subcellular location">
    <subcellularLocation>
        <location evidence="1">Nucleus</location>
    </subcellularLocation>
    <text evidence="1">Associates with chromatin.</text>
</comment>
<comment type="similarity">
    <text evidence="3">Belongs to the MCMBP family.</text>
</comment>
<name>MCMBP_DANRE</name>
<proteinExistence type="evidence at transcript level"/>
<accession>Q803A6</accession>
<accession>A8E7D0</accession>
<protein>
    <recommendedName>
        <fullName>Mini-chromosome maintenance complex-binding protein</fullName>
        <shortName>MCM-BP</shortName>
        <shortName>MCM-binding protein</shortName>
    </recommendedName>
</protein>
<gene>
    <name type="primary">mcmbp</name>
    <name type="ORF">si:dkey-192p21.2</name>
</gene>
<sequence length="631" mass="71062">MPTTHDWINNPLGVVDGLFAQSNSSPDWEKKVVEYFKEKLKLNDAHTWVPSLNDVPLHYLKPNSLVKFRCMVQDMFDPEFFMGVYEMNDPTSNSKQVKCGKYKDVTECGQVDFNSRNTVTSERQTFYCVPIPGESNWVKESYAGTSQARVVPSTSYVPNRHKRSYEEDDEMDTQCQQTKDISQGAQSSSESHGNTEPKRQETEAPSQDSSSSHCTSSLDLNFPLPGEKGPACLVKVYEDWDSFKLNDMLEVFGILSVDPALSVIADEREASSLLDPTEGMETMEEQRVHSPPASLVPRLHMLYAQPLAHNNPLLPSSPLENNADYLSCVLGELASVRAELLTFFTHILMGDSLAAEFLILHLISNVYSRRDVLPLGKFTLNLSGCPLSSPFTEHLFKVIQQLVPSSYRLSMSLHNMNTQRMVPRKDYTANRLVSGTLQLAKNTSLFLDETQLEQGQLDSTGVRNITALGNLISWQKVDYDFNYHQMEFPCNINVLIASEGRSLLPSDCQVHLRASLNPPNLEEYLSAVQVAQVPSQLNKYRVYLSVARALNYTISDEITKAVEEDFVDMRKDDPQSMSAEDLHRLLVVARLLSLSHGQNTLSRDGWMKAKQLEALRISRTQQQKCVNGNEP</sequence>